<protein>
    <recommendedName>
        <fullName>ORM1-like protein 2</fullName>
    </recommendedName>
</protein>
<gene>
    <name type="primary">Ormdl2</name>
</gene>
<reference key="1">
    <citation type="journal article" date="2005" name="Science">
        <title>The transcriptional landscape of the mammalian genome.</title>
        <authorList>
            <person name="Carninci P."/>
            <person name="Kasukawa T."/>
            <person name="Katayama S."/>
            <person name="Gough J."/>
            <person name="Frith M.C."/>
            <person name="Maeda N."/>
            <person name="Oyama R."/>
            <person name="Ravasi T."/>
            <person name="Lenhard B."/>
            <person name="Wells C."/>
            <person name="Kodzius R."/>
            <person name="Shimokawa K."/>
            <person name="Bajic V.B."/>
            <person name="Brenner S.E."/>
            <person name="Batalov S."/>
            <person name="Forrest A.R."/>
            <person name="Zavolan M."/>
            <person name="Davis M.J."/>
            <person name="Wilming L.G."/>
            <person name="Aidinis V."/>
            <person name="Allen J.E."/>
            <person name="Ambesi-Impiombato A."/>
            <person name="Apweiler R."/>
            <person name="Aturaliya R.N."/>
            <person name="Bailey T.L."/>
            <person name="Bansal M."/>
            <person name="Baxter L."/>
            <person name="Beisel K.W."/>
            <person name="Bersano T."/>
            <person name="Bono H."/>
            <person name="Chalk A.M."/>
            <person name="Chiu K.P."/>
            <person name="Choudhary V."/>
            <person name="Christoffels A."/>
            <person name="Clutterbuck D.R."/>
            <person name="Crowe M.L."/>
            <person name="Dalla E."/>
            <person name="Dalrymple B.P."/>
            <person name="de Bono B."/>
            <person name="Della Gatta G."/>
            <person name="di Bernardo D."/>
            <person name="Down T."/>
            <person name="Engstrom P."/>
            <person name="Fagiolini M."/>
            <person name="Faulkner G."/>
            <person name="Fletcher C.F."/>
            <person name="Fukushima T."/>
            <person name="Furuno M."/>
            <person name="Futaki S."/>
            <person name="Gariboldi M."/>
            <person name="Georgii-Hemming P."/>
            <person name="Gingeras T.R."/>
            <person name="Gojobori T."/>
            <person name="Green R.E."/>
            <person name="Gustincich S."/>
            <person name="Harbers M."/>
            <person name="Hayashi Y."/>
            <person name="Hensch T.K."/>
            <person name="Hirokawa N."/>
            <person name="Hill D."/>
            <person name="Huminiecki L."/>
            <person name="Iacono M."/>
            <person name="Ikeo K."/>
            <person name="Iwama A."/>
            <person name="Ishikawa T."/>
            <person name="Jakt M."/>
            <person name="Kanapin A."/>
            <person name="Katoh M."/>
            <person name="Kawasawa Y."/>
            <person name="Kelso J."/>
            <person name="Kitamura H."/>
            <person name="Kitano H."/>
            <person name="Kollias G."/>
            <person name="Krishnan S.P."/>
            <person name="Kruger A."/>
            <person name="Kummerfeld S.K."/>
            <person name="Kurochkin I.V."/>
            <person name="Lareau L.F."/>
            <person name="Lazarevic D."/>
            <person name="Lipovich L."/>
            <person name="Liu J."/>
            <person name="Liuni S."/>
            <person name="McWilliam S."/>
            <person name="Madan Babu M."/>
            <person name="Madera M."/>
            <person name="Marchionni L."/>
            <person name="Matsuda H."/>
            <person name="Matsuzawa S."/>
            <person name="Miki H."/>
            <person name="Mignone F."/>
            <person name="Miyake S."/>
            <person name="Morris K."/>
            <person name="Mottagui-Tabar S."/>
            <person name="Mulder N."/>
            <person name="Nakano N."/>
            <person name="Nakauchi H."/>
            <person name="Ng P."/>
            <person name="Nilsson R."/>
            <person name="Nishiguchi S."/>
            <person name="Nishikawa S."/>
            <person name="Nori F."/>
            <person name="Ohara O."/>
            <person name="Okazaki Y."/>
            <person name="Orlando V."/>
            <person name="Pang K.C."/>
            <person name="Pavan W.J."/>
            <person name="Pavesi G."/>
            <person name="Pesole G."/>
            <person name="Petrovsky N."/>
            <person name="Piazza S."/>
            <person name="Reed J."/>
            <person name="Reid J.F."/>
            <person name="Ring B.Z."/>
            <person name="Ringwald M."/>
            <person name="Rost B."/>
            <person name="Ruan Y."/>
            <person name="Salzberg S.L."/>
            <person name="Sandelin A."/>
            <person name="Schneider C."/>
            <person name="Schoenbach C."/>
            <person name="Sekiguchi K."/>
            <person name="Semple C.A."/>
            <person name="Seno S."/>
            <person name="Sessa L."/>
            <person name="Sheng Y."/>
            <person name="Shibata Y."/>
            <person name="Shimada H."/>
            <person name="Shimada K."/>
            <person name="Silva D."/>
            <person name="Sinclair B."/>
            <person name="Sperling S."/>
            <person name="Stupka E."/>
            <person name="Sugiura K."/>
            <person name="Sultana R."/>
            <person name="Takenaka Y."/>
            <person name="Taki K."/>
            <person name="Tammoja K."/>
            <person name="Tan S.L."/>
            <person name="Tang S."/>
            <person name="Taylor M.S."/>
            <person name="Tegner J."/>
            <person name="Teichmann S.A."/>
            <person name="Ueda H.R."/>
            <person name="van Nimwegen E."/>
            <person name="Verardo R."/>
            <person name="Wei C.L."/>
            <person name="Yagi K."/>
            <person name="Yamanishi H."/>
            <person name="Zabarovsky E."/>
            <person name="Zhu S."/>
            <person name="Zimmer A."/>
            <person name="Hide W."/>
            <person name="Bult C."/>
            <person name="Grimmond S.M."/>
            <person name="Teasdale R.D."/>
            <person name="Liu E.T."/>
            <person name="Brusic V."/>
            <person name="Quackenbush J."/>
            <person name="Wahlestedt C."/>
            <person name="Mattick J.S."/>
            <person name="Hume D.A."/>
            <person name="Kai C."/>
            <person name="Sasaki D."/>
            <person name="Tomaru Y."/>
            <person name="Fukuda S."/>
            <person name="Kanamori-Katayama M."/>
            <person name="Suzuki M."/>
            <person name="Aoki J."/>
            <person name="Arakawa T."/>
            <person name="Iida J."/>
            <person name="Imamura K."/>
            <person name="Itoh M."/>
            <person name="Kato T."/>
            <person name="Kawaji H."/>
            <person name="Kawagashira N."/>
            <person name="Kawashima T."/>
            <person name="Kojima M."/>
            <person name="Kondo S."/>
            <person name="Konno H."/>
            <person name="Nakano K."/>
            <person name="Ninomiya N."/>
            <person name="Nishio T."/>
            <person name="Okada M."/>
            <person name="Plessy C."/>
            <person name="Shibata K."/>
            <person name="Shiraki T."/>
            <person name="Suzuki S."/>
            <person name="Tagami M."/>
            <person name="Waki K."/>
            <person name="Watahiki A."/>
            <person name="Okamura-Oho Y."/>
            <person name="Suzuki H."/>
            <person name="Kawai J."/>
            <person name="Hayashizaki Y."/>
        </authorList>
    </citation>
    <scope>NUCLEOTIDE SEQUENCE [LARGE SCALE MRNA] (ISOFORMS 1 AND 2)</scope>
    <source>
        <strain>C57BL/6J</strain>
        <tissue>Kidney</tissue>
        <tissue>Pancreas</tissue>
    </source>
</reference>
<reference key="2">
    <citation type="journal article" date="2004" name="Genome Res.">
        <title>The status, quality, and expansion of the NIH full-length cDNA project: the Mammalian Gene Collection (MGC).</title>
        <authorList>
            <consortium name="The MGC Project Team"/>
        </authorList>
    </citation>
    <scope>NUCLEOTIDE SEQUENCE [LARGE SCALE MRNA] (ISOFORM 1)</scope>
    <source>
        <strain>FVB/N</strain>
        <tissue>Mammary tumor</tissue>
    </source>
</reference>
<reference key="3">
    <citation type="journal article" date="2010" name="Cell">
        <title>A tissue-specific atlas of mouse protein phosphorylation and expression.</title>
        <authorList>
            <person name="Huttlin E.L."/>
            <person name="Jedrychowski M.P."/>
            <person name="Elias J.E."/>
            <person name="Goswami T."/>
            <person name="Rad R."/>
            <person name="Beausoleil S.A."/>
            <person name="Villen J."/>
            <person name="Haas W."/>
            <person name="Sowa M.E."/>
            <person name="Gygi S.P."/>
        </authorList>
    </citation>
    <scope>IDENTIFICATION BY MASS SPECTROMETRY [LARGE SCALE ANALYSIS]</scope>
    <source>
        <tissue>Testis</tissue>
    </source>
</reference>
<reference key="4">
    <citation type="journal article" date="2019" name="Elife">
        <title>The Ormdl genes regulate the sphingolipid synthesis pathway to ensure proper myelination and neurologic function in mice.</title>
        <authorList>
            <person name="Clarke B.A."/>
            <person name="Majumder S."/>
            <person name="Zhu H."/>
            <person name="Lee Y.T."/>
            <person name="Kono M."/>
            <person name="Li C."/>
            <person name="Khanna C."/>
            <person name="Blain H."/>
            <person name="Schwartz R."/>
            <person name="Huso V.L."/>
            <person name="Byrnes C."/>
            <person name="Tuymetova G."/>
            <person name="Dunn T.M."/>
            <person name="Allende M.L."/>
            <person name="Proia R.L."/>
        </authorList>
    </citation>
    <scope>FUNCTION</scope>
    <scope>DISRUPTION PHENOTYPE</scope>
</reference>
<accession>Q9CQZ0</accession>
<accession>Q8CF72</accession>
<accession>Q9CSJ7</accession>
<accession>Q9CVL6</accession>
<comment type="function">
    <text evidence="2 4">Plays an essential role in the homeostatic regulation of sphingolipid de novo biosynthesis by modulating the activity of the serine palmitoyltransferase (SPT) in response to ceramide levels (PubMed:31880535). When complexed to SPT, the binding of ceramides to its N-terminus stabilizes a conformation that block SPT substrate entry, hence preventing SPT catalytic activity. Through this mechanism, maintains ceramide levels at sufficient concentrations for the production of complex sphingolipids, but which prevents the accumulation of ceramides to levels that trigger apoptosis (By similarity).</text>
</comment>
<comment type="subunit">
    <text evidence="1">Ceramide-sensitive subunit of the serine palmitoyltransferase (SPT) complex, which is also composed of SPTLC1, SPTLC2/3 and SPTSSA/B.</text>
</comment>
<comment type="subcellular location">
    <subcellularLocation>
        <location evidence="1">Endoplasmic reticulum membrane</location>
        <topology evidence="1">Multi-pass membrane protein</topology>
    </subcellularLocation>
</comment>
<comment type="alternative products">
    <event type="alternative splicing"/>
    <isoform>
        <id>Q9CQZ0-1</id>
        <name>1</name>
        <sequence type="displayed"/>
    </isoform>
    <isoform>
        <id>Q9CQZ0-2</id>
        <name>2</name>
        <sequence type="described" ref="VSP_016051"/>
    </isoform>
</comment>
<comment type="domain">
    <text evidence="2">Ceramides bind to ORMDL3 N-terminus and stabilize it in a conformation that physically restricts the accessibility of the substrates to their binding sites in the serine palmitoyltransferase (SPT) complex, hence inhibiting SPT catalytic activity. In the absence of ceramides, the N-terminus is flexible and permits substrate binding, thus liberating SPT from inhibition.</text>
</comment>
<comment type="disruption phenotype">
    <text evidence="4">No overt phenotype (PubMed:31880535). Simultaneous knockdown of ORMDL1 and ORMDL2 do not exhibit any visible phenotype (PubMed:31880535). Simultaneous knockdown of ORMDL2 and ORMDL3 show elevated brain levels of sphingolipids, compared with wild-type animals, but remain fertile and show no sign of neurodegeneration (PubMed:31880535). The triple knockout ORMDL1, ORMDL2 and ORMDL3 is not viable (PubMed:31880535).</text>
</comment>
<comment type="similarity">
    <text evidence="6">Belongs to the ORM family.</text>
</comment>
<feature type="chain" id="PRO_0000215637" description="ORM1-like protein 2">
    <location>
        <begin position="1"/>
        <end position="153"/>
    </location>
</feature>
<feature type="topological domain" description="Cytoplasmic" evidence="3">
    <location>
        <begin position="1"/>
        <end position="21"/>
    </location>
</feature>
<feature type="transmembrane region" description="Helical" evidence="3">
    <location>
        <begin position="22"/>
        <end position="42"/>
    </location>
</feature>
<feature type="transmembrane region" description="Helical" evidence="3">
    <location>
        <begin position="43"/>
        <end position="63"/>
    </location>
</feature>
<feature type="topological domain" description="Cytoplasmic" evidence="3">
    <location>
        <begin position="64"/>
        <end position="105"/>
    </location>
</feature>
<feature type="transmembrane region" description="Helical" evidence="3">
    <location>
        <begin position="106"/>
        <end position="126"/>
    </location>
</feature>
<feature type="topological domain" description="Extracellular" evidence="3">
    <location>
        <begin position="127"/>
        <end position="153"/>
    </location>
</feature>
<feature type="splice variant" id="VSP_016051" description="In isoform 2." evidence="5">
    <location>
        <begin position="1"/>
        <end position="59"/>
    </location>
</feature>
<feature type="sequence conflict" description="In Ref. 1; BAB28407." evidence="6" ref="1">
    <original>L</original>
    <variation>P</variation>
    <location>
        <position position="37"/>
    </location>
</feature>
<sequence>MNVGVAHSEVNPNTRVMNSRGIWLAYIILVGLLHVVLLSIPFFSIPVVWTLTNVIHNLAMYIFLHTVKGTPFETPDQGKARLLTHWEQMDYGLQFTSSRKFLSISPIVLYLLASFYTKYDAAHFLINTASLLSVLLPKLPQFHGVRLFGINKY</sequence>
<proteinExistence type="evidence at protein level"/>
<evidence type="ECO:0000250" key="1">
    <source>
        <dbReference type="UniProtKB" id="Q53FV1"/>
    </source>
</evidence>
<evidence type="ECO:0000250" key="2">
    <source>
        <dbReference type="UniProtKB" id="Q8N138"/>
    </source>
</evidence>
<evidence type="ECO:0000255" key="3"/>
<evidence type="ECO:0000269" key="4">
    <source>
    </source>
</evidence>
<evidence type="ECO:0000303" key="5">
    <source>
    </source>
</evidence>
<evidence type="ECO:0000305" key="6"/>
<dbReference type="EMBL" id="AK002583">
    <property type="protein sequence ID" value="BAB22207.1"/>
    <property type="molecule type" value="mRNA"/>
</dbReference>
<dbReference type="EMBL" id="AK002824">
    <property type="protein sequence ID" value="BAC25010.1"/>
    <property type="molecule type" value="mRNA"/>
</dbReference>
<dbReference type="EMBL" id="AK007548">
    <property type="protein sequence ID" value="BAB25101.1"/>
    <property type="molecule type" value="mRNA"/>
</dbReference>
<dbReference type="EMBL" id="AK012681">
    <property type="protein sequence ID" value="BAB28407.1"/>
    <property type="molecule type" value="mRNA"/>
</dbReference>
<dbReference type="EMBL" id="AK013455">
    <property type="protein sequence ID" value="BAB28864.1"/>
    <property type="molecule type" value="mRNA"/>
</dbReference>
<dbReference type="EMBL" id="BC002146">
    <property type="protein sequence ID" value="AAH02146.1"/>
    <property type="molecule type" value="mRNA"/>
</dbReference>
<dbReference type="CCDS" id="CCDS24295.1">
    <molecule id="Q9CQZ0-1"/>
</dbReference>
<dbReference type="RefSeq" id="NP_001346098.1">
    <molecule id="Q9CQZ0-1"/>
    <property type="nucleotide sequence ID" value="NM_001359169.1"/>
</dbReference>
<dbReference type="RefSeq" id="NP_001346099.1">
    <molecule id="Q9CQZ0-1"/>
    <property type="nucleotide sequence ID" value="NM_001359170.1"/>
</dbReference>
<dbReference type="RefSeq" id="NP_001346100.1">
    <molecule id="Q9CQZ0-1"/>
    <property type="nucleotide sequence ID" value="NM_001359171.1"/>
</dbReference>
<dbReference type="RefSeq" id="NP_077142.1">
    <molecule id="Q9CQZ0-1"/>
    <property type="nucleotide sequence ID" value="NM_024180.6"/>
</dbReference>
<dbReference type="RefSeq" id="XP_006514022.1">
    <property type="nucleotide sequence ID" value="XM_006513959.2"/>
</dbReference>
<dbReference type="SMR" id="Q9CQZ0"/>
<dbReference type="BioGRID" id="211758">
    <property type="interactions" value="1"/>
</dbReference>
<dbReference type="FunCoup" id="Q9CQZ0">
    <property type="interactions" value="1506"/>
</dbReference>
<dbReference type="IntAct" id="Q9CQZ0">
    <property type="interactions" value="7"/>
</dbReference>
<dbReference type="STRING" id="10090.ENSMUSP00000026409"/>
<dbReference type="iPTMnet" id="Q9CQZ0"/>
<dbReference type="PhosphoSitePlus" id="Q9CQZ0"/>
<dbReference type="jPOST" id="Q9CQZ0"/>
<dbReference type="PaxDb" id="10090-ENSMUSP00000026409"/>
<dbReference type="PeptideAtlas" id="Q9CQZ0"/>
<dbReference type="ProteomicsDB" id="294347">
    <molecule id="Q9CQZ0-1"/>
</dbReference>
<dbReference type="ProteomicsDB" id="294348">
    <molecule id="Q9CQZ0-2"/>
</dbReference>
<dbReference type="Pumba" id="Q9CQZ0"/>
<dbReference type="TopDownProteomics" id="Q9CQZ0-1">
    <molecule id="Q9CQZ0-1"/>
</dbReference>
<dbReference type="Antibodypedia" id="53765">
    <property type="antibodies" value="78 antibodies from 16 providers"/>
</dbReference>
<dbReference type="DNASU" id="66844"/>
<dbReference type="Ensembl" id="ENSMUST00000026409.5">
    <molecule id="Q9CQZ0-1"/>
    <property type="protein sequence ID" value="ENSMUSP00000026409.4"/>
    <property type="gene ID" value="ENSMUSG00000025353.6"/>
</dbReference>
<dbReference type="Ensembl" id="ENSMUST00000217685.2">
    <molecule id="Q9CQZ0-2"/>
    <property type="protein sequence ID" value="ENSMUSP00000151644.2"/>
    <property type="gene ID" value="ENSMUSG00000025353.6"/>
</dbReference>
<dbReference type="Ensembl" id="ENSMUST00000219215.2">
    <molecule id="Q9CQZ0-1"/>
    <property type="protein sequence ID" value="ENSMUSP00000151335.2"/>
    <property type="gene ID" value="ENSMUSG00000025353.6"/>
</dbReference>
<dbReference type="Ensembl" id="ENSMUST00000219524.2">
    <molecule id="Q9CQZ0-1"/>
    <property type="protein sequence ID" value="ENSMUSP00000151697.2"/>
    <property type="gene ID" value="ENSMUSG00000025353.6"/>
</dbReference>
<dbReference type="GeneID" id="66844"/>
<dbReference type="KEGG" id="mmu:66844"/>
<dbReference type="UCSC" id="uc007hoo.2">
    <molecule id="Q9CQZ0-1"/>
    <property type="organism name" value="mouse"/>
</dbReference>
<dbReference type="AGR" id="MGI:1914094"/>
<dbReference type="CTD" id="29095"/>
<dbReference type="MGI" id="MGI:1914094">
    <property type="gene designation" value="Ormdl2"/>
</dbReference>
<dbReference type="VEuPathDB" id="HostDB:ENSMUSG00000025353"/>
<dbReference type="eggNOG" id="KOG3319">
    <property type="taxonomic scope" value="Eukaryota"/>
</dbReference>
<dbReference type="GeneTree" id="ENSGT00950000183178"/>
<dbReference type="HOGENOM" id="CLU_072117_3_0_1"/>
<dbReference type="InParanoid" id="Q9CQZ0"/>
<dbReference type="OMA" id="STHYTHF"/>
<dbReference type="OrthoDB" id="1932233at2759"/>
<dbReference type="PhylomeDB" id="Q9CQZ0"/>
<dbReference type="TreeFam" id="TF323369"/>
<dbReference type="Reactome" id="R-MMU-1660661">
    <property type="pathway name" value="Sphingolipid de novo biosynthesis"/>
</dbReference>
<dbReference type="BioGRID-ORCS" id="66844">
    <property type="hits" value="2 hits in 78 CRISPR screens"/>
</dbReference>
<dbReference type="ChiTaRS" id="Ormdl2">
    <property type="organism name" value="mouse"/>
</dbReference>
<dbReference type="PRO" id="PR:Q9CQZ0"/>
<dbReference type="Proteomes" id="UP000000589">
    <property type="component" value="Chromosome 10"/>
</dbReference>
<dbReference type="RNAct" id="Q9CQZ0">
    <property type="molecule type" value="protein"/>
</dbReference>
<dbReference type="Bgee" id="ENSMUSG00000025353">
    <property type="expression patterns" value="Expressed in right kidney and 235 other cell types or tissues"/>
</dbReference>
<dbReference type="GO" id="GO:0005783">
    <property type="term" value="C:endoplasmic reticulum"/>
    <property type="evidence" value="ECO:0000250"/>
    <property type="project" value="UniProtKB"/>
</dbReference>
<dbReference type="GO" id="GO:0005789">
    <property type="term" value="C:endoplasmic reticulum membrane"/>
    <property type="evidence" value="ECO:0007669"/>
    <property type="project" value="UniProtKB-SubCell"/>
</dbReference>
<dbReference type="GO" id="GO:0006672">
    <property type="term" value="P:ceramide metabolic process"/>
    <property type="evidence" value="ECO:0000250"/>
    <property type="project" value="UniProtKB"/>
</dbReference>
<dbReference type="GO" id="GO:1900060">
    <property type="term" value="P:negative regulation of ceramide biosynthetic process"/>
    <property type="evidence" value="ECO:0000266"/>
    <property type="project" value="MGI"/>
</dbReference>
<dbReference type="InterPro" id="IPR007203">
    <property type="entry name" value="ORMDL"/>
</dbReference>
<dbReference type="PANTHER" id="PTHR12665">
    <property type="entry name" value="ORMDL PROTEINS"/>
    <property type="match status" value="1"/>
</dbReference>
<dbReference type="Pfam" id="PF04061">
    <property type="entry name" value="ORMDL"/>
    <property type="match status" value="1"/>
</dbReference>
<dbReference type="PIRSF" id="PIRSF018147">
    <property type="entry name" value="ORMDL"/>
    <property type="match status" value="1"/>
</dbReference>
<keyword id="KW-0025">Alternative splicing</keyword>
<keyword id="KW-0256">Endoplasmic reticulum</keyword>
<keyword id="KW-0472">Membrane</keyword>
<keyword id="KW-1185">Reference proteome</keyword>
<keyword id="KW-0812">Transmembrane</keyword>
<keyword id="KW-1133">Transmembrane helix</keyword>
<name>ORML2_MOUSE</name>
<organism>
    <name type="scientific">Mus musculus</name>
    <name type="common">Mouse</name>
    <dbReference type="NCBI Taxonomy" id="10090"/>
    <lineage>
        <taxon>Eukaryota</taxon>
        <taxon>Metazoa</taxon>
        <taxon>Chordata</taxon>
        <taxon>Craniata</taxon>
        <taxon>Vertebrata</taxon>
        <taxon>Euteleostomi</taxon>
        <taxon>Mammalia</taxon>
        <taxon>Eutheria</taxon>
        <taxon>Euarchontoglires</taxon>
        <taxon>Glires</taxon>
        <taxon>Rodentia</taxon>
        <taxon>Myomorpha</taxon>
        <taxon>Muroidea</taxon>
        <taxon>Muridae</taxon>
        <taxon>Murinae</taxon>
        <taxon>Mus</taxon>
        <taxon>Mus</taxon>
    </lineage>
</organism>